<feature type="chain" id="PRO_0000236283" description="Ribonuclease HII">
    <location>
        <begin position="1"/>
        <end position="212"/>
    </location>
</feature>
<feature type="domain" description="RNase H type-2" evidence="2">
    <location>
        <begin position="2"/>
        <end position="206"/>
    </location>
</feature>
<feature type="binding site" evidence="1">
    <location>
        <position position="8"/>
    </location>
    <ligand>
        <name>a divalent metal cation</name>
        <dbReference type="ChEBI" id="CHEBI:60240"/>
    </ligand>
</feature>
<feature type="binding site" evidence="1">
    <location>
        <position position="9"/>
    </location>
    <ligand>
        <name>a divalent metal cation</name>
        <dbReference type="ChEBI" id="CHEBI:60240"/>
    </ligand>
</feature>
<feature type="binding site" evidence="1">
    <location>
        <position position="101"/>
    </location>
    <ligand>
        <name>a divalent metal cation</name>
        <dbReference type="ChEBI" id="CHEBI:60240"/>
    </ligand>
</feature>
<organism>
    <name type="scientific">Natronomonas pharaonis (strain ATCC 35678 / DSM 2160 / CIP 103997 / JCM 8858 / NBRC 14720 / NCIMB 2260 / Gabara)</name>
    <name type="common">Halobacterium pharaonis</name>
    <dbReference type="NCBI Taxonomy" id="348780"/>
    <lineage>
        <taxon>Archaea</taxon>
        <taxon>Methanobacteriati</taxon>
        <taxon>Methanobacteriota</taxon>
        <taxon>Stenosarchaea group</taxon>
        <taxon>Halobacteria</taxon>
        <taxon>Halobacteriales</taxon>
        <taxon>Haloarculaceae</taxon>
        <taxon>Natronomonas</taxon>
    </lineage>
</organism>
<accession>Q3IRF6</accession>
<protein>
    <recommendedName>
        <fullName evidence="1">Ribonuclease HII</fullName>
        <shortName evidence="1">RNase HII</shortName>
        <ecNumber evidence="1">3.1.26.4</ecNumber>
    </recommendedName>
</protein>
<comment type="function">
    <text evidence="1">Endonuclease that specifically degrades the RNA of RNA-DNA hybrids.</text>
</comment>
<comment type="catalytic activity">
    <reaction evidence="1">
        <text>Endonucleolytic cleavage to 5'-phosphomonoester.</text>
        <dbReference type="EC" id="3.1.26.4"/>
    </reaction>
</comment>
<comment type="cofactor">
    <cofactor evidence="1">
        <name>Mn(2+)</name>
        <dbReference type="ChEBI" id="CHEBI:29035"/>
    </cofactor>
    <cofactor evidence="1">
        <name>Mg(2+)</name>
        <dbReference type="ChEBI" id="CHEBI:18420"/>
    </cofactor>
    <text evidence="1">Manganese or magnesium. Binds 1 divalent metal ion per monomer in the absence of substrate. May bind a second metal ion after substrate binding.</text>
</comment>
<comment type="subcellular location">
    <subcellularLocation>
        <location evidence="1">Cytoplasm</location>
    </subcellularLocation>
</comment>
<comment type="similarity">
    <text evidence="1">Belongs to the RNase HII family.</text>
</comment>
<keyword id="KW-0963">Cytoplasm</keyword>
<keyword id="KW-0255">Endonuclease</keyword>
<keyword id="KW-0378">Hydrolase</keyword>
<keyword id="KW-0464">Manganese</keyword>
<keyword id="KW-0479">Metal-binding</keyword>
<keyword id="KW-0540">Nuclease</keyword>
<keyword id="KW-1185">Reference proteome</keyword>
<sequence length="212" mass="22105">MTPLVGVDEAGKGPVVGSMFVAAVRAPTEALPDGIDDSKRLTDDRREALADRLRDADRIDVAVVECQPADIDDANMNDLTVAAHAAALDGVAASGETVLCDAGDVDAGRFADRVAAAATLDVSVAAEHGADGSDDLVGAASIIAKSARERHVEQLSEQYGAVGSGYPSDPTTKAFLREAFEQEGGFPPCVRTSWSTCERIRAEAEQTDLDGF</sequence>
<name>RNH2_NATPD</name>
<gene>
    <name evidence="1" type="primary">rnhB</name>
    <name type="ordered locus">NP_2392A</name>
</gene>
<proteinExistence type="inferred from homology"/>
<dbReference type="EC" id="3.1.26.4" evidence="1"/>
<dbReference type="EMBL" id="CR936257">
    <property type="protein sequence ID" value="CAI49287.1"/>
    <property type="molecule type" value="Genomic_DNA"/>
</dbReference>
<dbReference type="RefSeq" id="WP_011322913.1">
    <property type="nucleotide sequence ID" value="NC_007426.1"/>
</dbReference>
<dbReference type="SMR" id="Q3IRF6"/>
<dbReference type="STRING" id="348780.NP_2392A"/>
<dbReference type="EnsemblBacteria" id="CAI49287">
    <property type="protein sequence ID" value="CAI49287"/>
    <property type="gene ID" value="NP_2392A"/>
</dbReference>
<dbReference type="GeneID" id="3703111"/>
<dbReference type="KEGG" id="nph:NP_2392A"/>
<dbReference type="eggNOG" id="arCOG04121">
    <property type="taxonomic scope" value="Archaea"/>
</dbReference>
<dbReference type="HOGENOM" id="CLU_036532_0_4_2"/>
<dbReference type="OrthoDB" id="33866at2157"/>
<dbReference type="Proteomes" id="UP000002698">
    <property type="component" value="Chromosome"/>
</dbReference>
<dbReference type="GO" id="GO:0005737">
    <property type="term" value="C:cytoplasm"/>
    <property type="evidence" value="ECO:0007669"/>
    <property type="project" value="UniProtKB-SubCell"/>
</dbReference>
<dbReference type="GO" id="GO:0032299">
    <property type="term" value="C:ribonuclease H2 complex"/>
    <property type="evidence" value="ECO:0007669"/>
    <property type="project" value="TreeGrafter"/>
</dbReference>
<dbReference type="GO" id="GO:0030145">
    <property type="term" value="F:manganese ion binding"/>
    <property type="evidence" value="ECO:0007669"/>
    <property type="project" value="UniProtKB-UniRule"/>
</dbReference>
<dbReference type="GO" id="GO:0003723">
    <property type="term" value="F:RNA binding"/>
    <property type="evidence" value="ECO:0007669"/>
    <property type="project" value="InterPro"/>
</dbReference>
<dbReference type="GO" id="GO:0004523">
    <property type="term" value="F:RNA-DNA hybrid ribonuclease activity"/>
    <property type="evidence" value="ECO:0007669"/>
    <property type="project" value="UniProtKB-UniRule"/>
</dbReference>
<dbReference type="GO" id="GO:0043137">
    <property type="term" value="P:DNA replication, removal of RNA primer"/>
    <property type="evidence" value="ECO:0007669"/>
    <property type="project" value="TreeGrafter"/>
</dbReference>
<dbReference type="GO" id="GO:0006298">
    <property type="term" value="P:mismatch repair"/>
    <property type="evidence" value="ECO:0007669"/>
    <property type="project" value="TreeGrafter"/>
</dbReference>
<dbReference type="CDD" id="cd07180">
    <property type="entry name" value="RNase_HII_archaea_like"/>
    <property type="match status" value="1"/>
</dbReference>
<dbReference type="FunFam" id="1.10.10.460:FF:000001">
    <property type="entry name" value="Ribonuclease"/>
    <property type="match status" value="1"/>
</dbReference>
<dbReference type="Gene3D" id="3.30.420.10">
    <property type="entry name" value="Ribonuclease H-like superfamily/Ribonuclease H"/>
    <property type="match status" value="1"/>
</dbReference>
<dbReference type="Gene3D" id="1.10.10.460">
    <property type="entry name" value="Ribonuclease hii. Domain 2"/>
    <property type="match status" value="1"/>
</dbReference>
<dbReference type="HAMAP" id="MF_00052_A">
    <property type="entry name" value="RNase_HII_A"/>
    <property type="match status" value="1"/>
</dbReference>
<dbReference type="InterPro" id="IPR004649">
    <property type="entry name" value="RNase_H2_suA"/>
</dbReference>
<dbReference type="InterPro" id="IPR001352">
    <property type="entry name" value="RNase_HII/HIII"/>
</dbReference>
<dbReference type="InterPro" id="IPR024567">
    <property type="entry name" value="RNase_HII/HIII_dom"/>
</dbReference>
<dbReference type="InterPro" id="IPR020787">
    <property type="entry name" value="RNase_HII_arc"/>
</dbReference>
<dbReference type="InterPro" id="IPR023160">
    <property type="entry name" value="RNase_HII_hlx-loop-hlx_cap_dom"/>
</dbReference>
<dbReference type="InterPro" id="IPR012337">
    <property type="entry name" value="RNaseH-like_sf"/>
</dbReference>
<dbReference type="InterPro" id="IPR036397">
    <property type="entry name" value="RNaseH_sf"/>
</dbReference>
<dbReference type="NCBIfam" id="TIGR00729">
    <property type="entry name" value="ribonuclease HII"/>
    <property type="match status" value="1"/>
</dbReference>
<dbReference type="PANTHER" id="PTHR10954:SF23">
    <property type="entry name" value="RIBONUCLEASE"/>
    <property type="match status" value="1"/>
</dbReference>
<dbReference type="PANTHER" id="PTHR10954">
    <property type="entry name" value="RIBONUCLEASE H2 SUBUNIT A"/>
    <property type="match status" value="1"/>
</dbReference>
<dbReference type="Pfam" id="PF01351">
    <property type="entry name" value="RNase_HII"/>
    <property type="match status" value="1"/>
</dbReference>
<dbReference type="SUPFAM" id="SSF53098">
    <property type="entry name" value="Ribonuclease H-like"/>
    <property type="match status" value="1"/>
</dbReference>
<dbReference type="PROSITE" id="PS51975">
    <property type="entry name" value="RNASE_H_2"/>
    <property type="match status" value="1"/>
</dbReference>
<evidence type="ECO:0000255" key="1">
    <source>
        <dbReference type="HAMAP-Rule" id="MF_00052"/>
    </source>
</evidence>
<evidence type="ECO:0000255" key="2">
    <source>
        <dbReference type="PROSITE-ProRule" id="PRU01319"/>
    </source>
</evidence>
<reference key="1">
    <citation type="journal article" date="2005" name="Genome Res.">
        <title>Living with two extremes: conclusions from the genome sequence of Natronomonas pharaonis.</title>
        <authorList>
            <person name="Falb M."/>
            <person name="Pfeiffer F."/>
            <person name="Palm P."/>
            <person name="Rodewald K."/>
            <person name="Hickmann V."/>
            <person name="Tittor J."/>
            <person name="Oesterhelt D."/>
        </authorList>
    </citation>
    <scope>NUCLEOTIDE SEQUENCE [LARGE SCALE GENOMIC DNA]</scope>
    <source>
        <strain>ATCC 35678 / DSM 2160 / CIP 103997 / JCM 8858 / NBRC 14720 / NCIMB 2260 / Gabara</strain>
    </source>
</reference>